<comment type="function">
    <text evidence="1">Involved in unsaturated fatty acids biosynthesis. Catalyzes the dehydration of short chain beta-hydroxyacyl-ACPs and long chain saturated and unsaturated beta-hydroxyacyl-ACPs.</text>
</comment>
<comment type="catalytic activity">
    <reaction evidence="1">
        <text>a (3R)-hydroxyacyl-[ACP] = a (2E)-enoyl-[ACP] + H2O</text>
        <dbReference type="Rhea" id="RHEA:13097"/>
        <dbReference type="Rhea" id="RHEA-COMP:9925"/>
        <dbReference type="Rhea" id="RHEA-COMP:9945"/>
        <dbReference type="ChEBI" id="CHEBI:15377"/>
        <dbReference type="ChEBI" id="CHEBI:78784"/>
        <dbReference type="ChEBI" id="CHEBI:78827"/>
        <dbReference type="EC" id="4.2.1.59"/>
    </reaction>
</comment>
<comment type="subcellular location">
    <subcellularLocation>
        <location evidence="1">Cytoplasm</location>
    </subcellularLocation>
</comment>
<comment type="similarity">
    <text evidence="1">Belongs to the thioester dehydratase family. FabZ subfamily.</text>
</comment>
<keyword id="KW-0963">Cytoplasm</keyword>
<keyword id="KW-0441">Lipid A biosynthesis</keyword>
<keyword id="KW-0444">Lipid biosynthesis</keyword>
<keyword id="KW-0443">Lipid metabolism</keyword>
<keyword id="KW-0456">Lyase</keyword>
<evidence type="ECO:0000255" key="1">
    <source>
        <dbReference type="HAMAP-Rule" id="MF_00406"/>
    </source>
</evidence>
<organism>
    <name type="scientific">Rhodopseudomonas palustris (strain TIE-1)</name>
    <dbReference type="NCBI Taxonomy" id="395960"/>
    <lineage>
        <taxon>Bacteria</taxon>
        <taxon>Pseudomonadati</taxon>
        <taxon>Pseudomonadota</taxon>
        <taxon>Alphaproteobacteria</taxon>
        <taxon>Hyphomicrobiales</taxon>
        <taxon>Nitrobacteraceae</taxon>
        <taxon>Rhodopseudomonas</taxon>
    </lineage>
</organism>
<protein>
    <recommendedName>
        <fullName evidence="1">3-hydroxyacyl-[acyl-carrier-protein] dehydratase FabZ</fullName>
        <ecNumber evidence="1">4.2.1.59</ecNumber>
    </recommendedName>
    <alternativeName>
        <fullName evidence="1">(3R)-hydroxymyristoyl-[acyl-carrier-protein] dehydratase</fullName>
        <shortName evidence="1">(3R)-hydroxymyristoyl-ACP dehydrase</shortName>
    </alternativeName>
    <alternativeName>
        <fullName evidence="1">Beta-hydroxyacyl-ACP dehydratase</fullName>
    </alternativeName>
</protein>
<feature type="chain" id="PRO_1000123657" description="3-hydroxyacyl-[acyl-carrier-protein] dehydratase FabZ">
    <location>
        <begin position="1"/>
        <end position="151"/>
    </location>
</feature>
<feature type="active site" evidence="1">
    <location>
        <position position="56"/>
    </location>
</feature>
<reference key="1">
    <citation type="submission" date="2008-05" db="EMBL/GenBank/DDBJ databases">
        <title>Complete sequence of Rhodopseudomonas palustris TIE-1.</title>
        <authorList>
            <consortium name="US DOE Joint Genome Institute"/>
            <person name="Lucas S."/>
            <person name="Copeland A."/>
            <person name="Lapidus A."/>
            <person name="Glavina del Rio T."/>
            <person name="Dalin E."/>
            <person name="Tice H."/>
            <person name="Pitluck S."/>
            <person name="Chain P."/>
            <person name="Malfatti S."/>
            <person name="Shin M."/>
            <person name="Vergez L."/>
            <person name="Lang D."/>
            <person name="Schmutz J."/>
            <person name="Larimer F."/>
            <person name="Land M."/>
            <person name="Hauser L."/>
            <person name="Kyrpides N."/>
            <person name="Mikhailova N."/>
            <person name="Emerson D."/>
            <person name="Newman D.K."/>
            <person name="Roden E."/>
            <person name="Richardson P."/>
        </authorList>
    </citation>
    <scope>NUCLEOTIDE SEQUENCE [LARGE SCALE GENOMIC DNA]</scope>
    <source>
        <strain>TIE-1</strain>
    </source>
</reference>
<accession>B3Q7J4</accession>
<dbReference type="EC" id="4.2.1.59" evidence="1"/>
<dbReference type="EMBL" id="CP001096">
    <property type="protein sequence ID" value="ACF01760.1"/>
    <property type="molecule type" value="Genomic_DNA"/>
</dbReference>
<dbReference type="RefSeq" id="WP_011158461.1">
    <property type="nucleotide sequence ID" value="NC_011004.1"/>
</dbReference>
<dbReference type="SMR" id="B3Q7J4"/>
<dbReference type="GeneID" id="66893994"/>
<dbReference type="KEGG" id="rpt:Rpal_3258"/>
<dbReference type="HOGENOM" id="CLU_078912_1_0_5"/>
<dbReference type="OrthoDB" id="9772788at2"/>
<dbReference type="Proteomes" id="UP000001725">
    <property type="component" value="Chromosome"/>
</dbReference>
<dbReference type="GO" id="GO:0005737">
    <property type="term" value="C:cytoplasm"/>
    <property type="evidence" value="ECO:0007669"/>
    <property type="project" value="UniProtKB-SubCell"/>
</dbReference>
<dbReference type="GO" id="GO:0016020">
    <property type="term" value="C:membrane"/>
    <property type="evidence" value="ECO:0007669"/>
    <property type="project" value="GOC"/>
</dbReference>
<dbReference type="GO" id="GO:0019171">
    <property type="term" value="F:(3R)-hydroxyacyl-[acyl-carrier-protein] dehydratase activity"/>
    <property type="evidence" value="ECO:0007669"/>
    <property type="project" value="UniProtKB-EC"/>
</dbReference>
<dbReference type="GO" id="GO:0006633">
    <property type="term" value="P:fatty acid biosynthetic process"/>
    <property type="evidence" value="ECO:0007669"/>
    <property type="project" value="UniProtKB-UniRule"/>
</dbReference>
<dbReference type="GO" id="GO:0009245">
    <property type="term" value="P:lipid A biosynthetic process"/>
    <property type="evidence" value="ECO:0007669"/>
    <property type="project" value="UniProtKB-UniRule"/>
</dbReference>
<dbReference type="CDD" id="cd01288">
    <property type="entry name" value="FabZ"/>
    <property type="match status" value="1"/>
</dbReference>
<dbReference type="FunFam" id="3.10.129.10:FF:000001">
    <property type="entry name" value="3-hydroxyacyl-[acyl-carrier-protein] dehydratase FabZ"/>
    <property type="match status" value="1"/>
</dbReference>
<dbReference type="Gene3D" id="3.10.129.10">
    <property type="entry name" value="Hotdog Thioesterase"/>
    <property type="match status" value="1"/>
</dbReference>
<dbReference type="HAMAP" id="MF_00406">
    <property type="entry name" value="FabZ"/>
    <property type="match status" value="1"/>
</dbReference>
<dbReference type="InterPro" id="IPR013114">
    <property type="entry name" value="FabA_FabZ"/>
</dbReference>
<dbReference type="InterPro" id="IPR010084">
    <property type="entry name" value="FabZ"/>
</dbReference>
<dbReference type="InterPro" id="IPR029069">
    <property type="entry name" value="HotDog_dom_sf"/>
</dbReference>
<dbReference type="NCBIfam" id="TIGR01750">
    <property type="entry name" value="fabZ"/>
    <property type="match status" value="1"/>
</dbReference>
<dbReference type="NCBIfam" id="NF000582">
    <property type="entry name" value="PRK00006.1"/>
    <property type="match status" value="1"/>
</dbReference>
<dbReference type="PANTHER" id="PTHR30272">
    <property type="entry name" value="3-HYDROXYACYL-[ACYL-CARRIER-PROTEIN] DEHYDRATASE"/>
    <property type="match status" value="1"/>
</dbReference>
<dbReference type="PANTHER" id="PTHR30272:SF1">
    <property type="entry name" value="3-HYDROXYACYL-[ACYL-CARRIER-PROTEIN] DEHYDRATASE"/>
    <property type="match status" value="1"/>
</dbReference>
<dbReference type="Pfam" id="PF07977">
    <property type="entry name" value="FabA"/>
    <property type="match status" value="1"/>
</dbReference>
<dbReference type="SUPFAM" id="SSF54637">
    <property type="entry name" value="Thioesterase/thiol ester dehydrase-isomerase"/>
    <property type="match status" value="1"/>
</dbReference>
<name>FABZ_RHOPT</name>
<proteinExistence type="inferred from homology"/>
<sequence>MESPIRFENVDINTILKTLPHRFPFLLIDRVINIREDYSGIGIKNVTVNEPAFQGHFPERPVYPGVLMIEGMAQTAGVIGILSVTGTEKPRAVYFLTIDKCKFRKPVMPGDTVEYHLTRTGRRKTMWWFHGEAKVDGQIVAEADVGAMLAD</sequence>
<gene>
    <name evidence="1" type="primary">fabZ</name>
    <name type="ordered locus">Rpal_3258</name>
</gene>